<proteinExistence type="inferred from homology"/>
<sequence length="336" mass="36048">MRAAVVTKDHKVSIEDKKLRALKPGEALVQTEYCGVCHTDLHVKNADFGDVTGVTLGHEGIGKVIEVAEDVESLKIGDRVSIAWMFESCGRCEYCTTGRETLCRSVKNAGYTVDGAMAEQVIVTADYAVKVPEKLDPAAASSITCAGVTTYKAVKVSNVKPGQWLGVFGIGGLGNLALQYAKNVMGAKIVAFDINDDKLAFAKELGADAIINSKDVDPVAEVMKLTDNKGLDATVVTSVAKTPFNQAVDVVKAGARVVAVGLPVDKMNLDIPRLVLDGIEVVGSLVGTRQDLREAFEFAAENKVTPKVQLRKLEEINDIFEEMENGTITGRMVIKF</sequence>
<reference key="1">
    <citation type="journal article" date="2004" name="Proc. Natl. Acad. Sci. U.S.A.">
        <title>Complete genomes of two clinical Staphylococcus aureus strains: evidence for the rapid evolution of virulence and drug resistance.</title>
        <authorList>
            <person name="Holden M.T.G."/>
            <person name="Feil E.J."/>
            <person name="Lindsay J.A."/>
            <person name="Peacock S.J."/>
            <person name="Day N.P.J."/>
            <person name="Enright M.C."/>
            <person name="Foster T.J."/>
            <person name="Moore C.E."/>
            <person name="Hurst L."/>
            <person name="Atkin R."/>
            <person name="Barron A."/>
            <person name="Bason N."/>
            <person name="Bentley S.D."/>
            <person name="Chillingworth C."/>
            <person name="Chillingworth T."/>
            <person name="Churcher C."/>
            <person name="Clark L."/>
            <person name="Corton C."/>
            <person name="Cronin A."/>
            <person name="Doggett J."/>
            <person name="Dowd L."/>
            <person name="Feltwell T."/>
            <person name="Hance Z."/>
            <person name="Harris B."/>
            <person name="Hauser H."/>
            <person name="Holroyd S."/>
            <person name="Jagels K."/>
            <person name="James K.D."/>
            <person name="Lennard N."/>
            <person name="Line A."/>
            <person name="Mayes R."/>
            <person name="Moule S."/>
            <person name="Mungall K."/>
            <person name="Ormond D."/>
            <person name="Quail M.A."/>
            <person name="Rabbinowitsch E."/>
            <person name="Rutherford K.M."/>
            <person name="Sanders M."/>
            <person name="Sharp S."/>
            <person name="Simmonds M."/>
            <person name="Stevens K."/>
            <person name="Whitehead S."/>
            <person name="Barrell B.G."/>
            <person name="Spratt B.G."/>
            <person name="Parkhill J."/>
        </authorList>
    </citation>
    <scope>NUCLEOTIDE SEQUENCE [LARGE SCALE GENOMIC DNA]</scope>
    <source>
        <strain>MRSA252</strain>
    </source>
</reference>
<dbReference type="EC" id="1.1.1.1"/>
<dbReference type="EMBL" id="BX571856">
    <property type="protein sequence ID" value="CAG39632.1"/>
    <property type="molecule type" value="Genomic_DNA"/>
</dbReference>
<dbReference type="SMR" id="Q6GJ63"/>
<dbReference type="KEGG" id="sar:SAR0613"/>
<dbReference type="HOGENOM" id="CLU_026673_20_1_9"/>
<dbReference type="Proteomes" id="UP000000596">
    <property type="component" value="Chromosome"/>
</dbReference>
<dbReference type="GO" id="GO:0004022">
    <property type="term" value="F:alcohol dehydrogenase (NAD+) activity"/>
    <property type="evidence" value="ECO:0007669"/>
    <property type="project" value="UniProtKB-EC"/>
</dbReference>
<dbReference type="GO" id="GO:0008270">
    <property type="term" value="F:zinc ion binding"/>
    <property type="evidence" value="ECO:0007669"/>
    <property type="project" value="InterPro"/>
</dbReference>
<dbReference type="CDD" id="cd08297">
    <property type="entry name" value="CAD3"/>
    <property type="match status" value="1"/>
</dbReference>
<dbReference type="FunFam" id="3.40.50.720:FF:000039">
    <property type="entry name" value="Alcohol dehydrogenase AdhP"/>
    <property type="match status" value="1"/>
</dbReference>
<dbReference type="Gene3D" id="3.90.180.10">
    <property type="entry name" value="Medium-chain alcohol dehydrogenases, catalytic domain"/>
    <property type="match status" value="1"/>
</dbReference>
<dbReference type="Gene3D" id="3.40.50.720">
    <property type="entry name" value="NAD(P)-binding Rossmann-like Domain"/>
    <property type="match status" value="1"/>
</dbReference>
<dbReference type="InterPro" id="IPR013149">
    <property type="entry name" value="ADH-like_C"/>
</dbReference>
<dbReference type="InterPro" id="IPR013154">
    <property type="entry name" value="ADH-like_N"/>
</dbReference>
<dbReference type="InterPro" id="IPR002328">
    <property type="entry name" value="ADH_Zn_CS"/>
</dbReference>
<dbReference type="InterPro" id="IPR029752">
    <property type="entry name" value="D-isomer_DH_CS1"/>
</dbReference>
<dbReference type="InterPro" id="IPR011032">
    <property type="entry name" value="GroES-like_sf"/>
</dbReference>
<dbReference type="InterPro" id="IPR036291">
    <property type="entry name" value="NAD(P)-bd_dom_sf"/>
</dbReference>
<dbReference type="InterPro" id="IPR020843">
    <property type="entry name" value="PKS_ER"/>
</dbReference>
<dbReference type="NCBIfam" id="NF006940">
    <property type="entry name" value="PRK09422.1"/>
    <property type="match status" value="1"/>
</dbReference>
<dbReference type="PANTHER" id="PTHR42940">
    <property type="entry name" value="ALCOHOL DEHYDROGENASE 1-RELATED"/>
    <property type="match status" value="1"/>
</dbReference>
<dbReference type="PANTHER" id="PTHR42940:SF8">
    <property type="entry name" value="VACUOLAR PROTEIN SORTING-ASSOCIATED PROTEIN 11"/>
    <property type="match status" value="1"/>
</dbReference>
<dbReference type="Pfam" id="PF08240">
    <property type="entry name" value="ADH_N"/>
    <property type="match status" value="1"/>
</dbReference>
<dbReference type="Pfam" id="PF00107">
    <property type="entry name" value="ADH_zinc_N"/>
    <property type="match status" value="1"/>
</dbReference>
<dbReference type="SMART" id="SM00829">
    <property type="entry name" value="PKS_ER"/>
    <property type="match status" value="1"/>
</dbReference>
<dbReference type="SUPFAM" id="SSF50129">
    <property type="entry name" value="GroES-like"/>
    <property type="match status" value="1"/>
</dbReference>
<dbReference type="SUPFAM" id="SSF51735">
    <property type="entry name" value="NAD(P)-binding Rossmann-fold domains"/>
    <property type="match status" value="1"/>
</dbReference>
<dbReference type="PROSITE" id="PS00059">
    <property type="entry name" value="ADH_ZINC"/>
    <property type="match status" value="1"/>
</dbReference>
<name>ADH_STAAR</name>
<evidence type="ECO:0000250" key="1"/>
<evidence type="ECO:0000305" key="2"/>
<protein>
    <recommendedName>
        <fullName>Alcohol dehydrogenase</fullName>
        <shortName>ADH</shortName>
        <ecNumber>1.1.1.1</ecNumber>
    </recommendedName>
</protein>
<accession>Q6GJ63</accession>
<organism>
    <name type="scientific">Staphylococcus aureus (strain MRSA252)</name>
    <dbReference type="NCBI Taxonomy" id="282458"/>
    <lineage>
        <taxon>Bacteria</taxon>
        <taxon>Bacillati</taxon>
        <taxon>Bacillota</taxon>
        <taxon>Bacilli</taxon>
        <taxon>Bacillales</taxon>
        <taxon>Staphylococcaceae</taxon>
        <taxon>Staphylococcus</taxon>
    </lineage>
</organism>
<keyword id="KW-0479">Metal-binding</keyword>
<keyword id="KW-0520">NAD</keyword>
<keyword id="KW-0560">Oxidoreductase</keyword>
<keyword id="KW-0862">Zinc</keyword>
<gene>
    <name type="primary">adh</name>
    <name type="ordered locus">SAR0613</name>
</gene>
<comment type="catalytic activity">
    <reaction>
        <text>a primary alcohol + NAD(+) = an aldehyde + NADH + H(+)</text>
        <dbReference type="Rhea" id="RHEA:10736"/>
        <dbReference type="ChEBI" id="CHEBI:15378"/>
        <dbReference type="ChEBI" id="CHEBI:15734"/>
        <dbReference type="ChEBI" id="CHEBI:17478"/>
        <dbReference type="ChEBI" id="CHEBI:57540"/>
        <dbReference type="ChEBI" id="CHEBI:57945"/>
        <dbReference type="EC" id="1.1.1.1"/>
    </reaction>
</comment>
<comment type="catalytic activity">
    <reaction>
        <text>a secondary alcohol + NAD(+) = a ketone + NADH + H(+)</text>
        <dbReference type="Rhea" id="RHEA:10740"/>
        <dbReference type="ChEBI" id="CHEBI:15378"/>
        <dbReference type="ChEBI" id="CHEBI:17087"/>
        <dbReference type="ChEBI" id="CHEBI:35681"/>
        <dbReference type="ChEBI" id="CHEBI:57540"/>
        <dbReference type="ChEBI" id="CHEBI:57945"/>
        <dbReference type="EC" id="1.1.1.1"/>
    </reaction>
</comment>
<comment type="cofactor">
    <cofactor evidence="1">
        <name>Zn(2+)</name>
        <dbReference type="ChEBI" id="CHEBI:29105"/>
    </cofactor>
    <text evidence="1">Binds 2 Zn(2+) ions per subunit.</text>
</comment>
<comment type="similarity">
    <text evidence="2">Belongs to the zinc-containing alcohol dehydrogenase family.</text>
</comment>
<feature type="chain" id="PRO_0000273038" description="Alcohol dehydrogenase">
    <location>
        <begin position="1"/>
        <end position="336"/>
    </location>
</feature>
<feature type="binding site" evidence="1">
    <location>
        <position position="37"/>
    </location>
    <ligand>
        <name>Zn(2+)</name>
        <dbReference type="ChEBI" id="CHEBI:29105"/>
        <label>1</label>
        <note>catalytic</note>
    </ligand>
</feature>
<feature type="binding site" evidence="1">
    <location>
        <position position="58"/>
    </location>
    <ligand>
        <name>Zn(2+)</name>
        <dbReference type="ChEBI" id="CHEBI:29105"/>
        <label>1</label>
        <note>catalytic</note>
    </ligand>
</feature>
<feature type="binding site" evidence="1">
    <location>
        <position position="89"/>
    </location>
    <ligand>
        <name>Zn(2+)</name>
        <dbReference type="ChEBI" id="CHEBI:29105"/>
        <label>2</label>
    </ligand>
</feature>
<feature type="binding site" evidence="1">
    <location>
        <position position="92"/>
    </location>
    <ligand>
        <name>Zn(2+)</name>
        <dbReference type="ChEBI" id="CHEBI:29105"/>
        <label>2</label>
    </ligand>
</feature>
<feature type="binding site" evidence="1">
    <location>
        <position position="95"/>
    </location>
    <ligand>
        <name>Zn(2+)</name>
        <dbReference type="ChEBI" id="CHEBI:29105"/>
        <label>2</label>
    </ligand>
</feature>
<feature type="binding site" evidence="1">
    <location>
        <position position="103"/>
    </location>
    <ligand>
        <name>Zn(2+)</name>
        <dbReference type="ChEBI" id="CHEBI:29105"/>
        <label>2</label>
    </ligand>
</feature>
<feature type="binding site" evidence="1">
    <location>
        <position position="145"/>
    </location>
    <ligand>
        <name>Zn(2+)</name>
        <dbReference type="ChEBI" id="CHEBI:29105"/>
        <label>1</label>
        <note>catalytic</note>
    </ligand>
</feature>